<name>195L_IIV6</name>
<gene>
    <name type="ORF">IIV6-195L</name>
</gene>
<sequence>MPSRKYKIYDDDVMVCDTKWINLSGNHMTMCECLSCRLKLYISFTKNPLTKFIIFHPSRNRFIYQSAFIFVGLDENNSIGCILMSYKLKEGLETFKNKYPELCYENKKYENKKYENIEKYLEKCLTVKPQKKRKIYYRL</sequence>
<reference key="1">
    <citation type="journal article" date="2001" name="Virology">
        <title>Analysis of the first complete DNA sequence of an invertebrate iridovirus: coding strategy of the genome of Chilo iridescent virus.</title>
        <authorList>
            <person name="Jakob N.J."/>
            <person name="Mueller K."/>
            <person name="Bahr U."/>
            <person name="Darai G."/>
        </authorList>
    </citation>
    <scope>NUCLEOTIDE SEQUENCE [LARGE SCALE GENOMIC DNA]</scope>
</reference>
<reference key="2">
    <citation type="journal article" date="2007" name="Virol. J.">
        <title>Comparative genomic analysis of the family Iridoviridae: re-annotating and defining the core set of iridovirus genes.</title>
        <authorList>
            <person name="Eaton H.E."/>
            <person name="Metcalf J."/>
            <person name="Penny E."/>
            <person name="Tcherepanov V."/>
            <person name="Upton C."/>
            <person name="Brunetti C.R."/>
        </authorList>
    </citation>
    <scope>GENOME REANNOTATION</scope>
</reference>
<protein>
    <recommendedName>
        <fullName>Uncharacterized protein 195L</fullName>
    </recommendedName>
</protein>
<keyword id="KW-1185">Reference proteome</keyword>
<organism>
    <name type="scientific">Invertebrate iridescent virus 6</name>
    <name type="common">IIV-6</name>
    <name type="synonym">Chilo iridescent virus</name>
    <dbReference type="NCBI Taxonomy" id="176652"/>
    <lineage>
        <taxon>Viruses</taxon>
        <taxon>Varidnaviria</taxon>
        <taxon>Bamfordvirae</taxon>
        <taxon>Nucleocytoviricota</taxon>
        <taxon>Megaviricetes</taxon>
        <taxon>Pimascovirales</taxon>
        <taxon>Iridoviridae</taxon>
        <taxon>Betairidovirinae</taxon>
        <taxon>Iridovirus</taxon>
    </lineage>
</organism>
<accession>O55771</accession>
<proteinExistence type="predicted"/>
<organismHost>
    <name type="scientific">Acheta domesticus</name>
    <name type="common">House cricket</name>
    <dbReference type="NCBI Taxonomy" id="6997"/>
</organismHost>
<organismHost>
    <name type="scientific">Chilo suppressalis</name>
    <name type="common">Asiatic rice borer moth</name>
    <dbReference type="NCBI Taxonomy" id="168631"/>
</organismHost>
<organismHost>
    <name type="scientific">Gryllus bimaculatus</name>
    <name type="common">Two-spotted cricket</name>
    <dbReference type="NCBI Taxonomy" id="6999"/>
</organismHost>
<organismHost>
    <name type="scientific">Gryllus campestris</name>
    <dbReference type="NCBI Taxonomy" id="58607"/>
</organismHost>
<organismHost>
    <name type="scientific">Spodoptera frugiperda</name>
    <name type="common">Fall armyworm</name>
    <dbReference type="NCBI Taxonomy" id="7108"/>
</organismHost>
<feature type="chain" id="PRO_0000378021" description="Uncharacterized protein 195L">
    <location>
        <begin position="1"/>
        <end position="139"/>
    </location>
</feature>
<dbReference type="EMBL" id="AF303741">
    <property type="protein sequence ID" value="AAB94482.1"/>
    <property type="molecule type" value="Genomic_DNA"/>
</dbReference>
<dbReference type="PIR" id="T03184">
    <property type="entry name" value="T03184"/>
</dbReference>
<dbReference type="RefSeq" id="NP_149658.1">
    <property type="nucleotide sequence ID" value="NC_003038.1"/>
</dbReference>
<dbReference type="KEGG" id="vg:1733152"/>
<dbReference type="Proteomes" id="UP000001359">
    <property type="component" value="Genome"/>
</dbReference>